<gene>
    <name type="ordered locus">MJ1336</name>
</gene>
<organism>
    <name type="scientific">Methanocaldococcus jannaschii (strain ATCC 43067 / DSM 2661 / JAL-1 / JCM 10045 / NBRC 100440)</name>
    <name type="common">Methanococcus jannaschii</name>
    <dbReference type="NCBI Taxonomy" id="243232"/>
    <lineage>
        <taxon>Archaea</taxon>
        <taxon>Methanobacteriati</taxon>
        <taxon>Methanobacteriota</taxon>
        <taxon>Methanomada group</taxon>
        <taxon>Methanococci</taxon>
        <taxon>Methanococcales</taxon>
        <taxon>Methanocaldococcaceae</taxon>
        <taxon>Methanocaldococcus</taxon>
    </lineage>
</organism>
<sequence length="148" mass="17013">MGYNQQLLRVDYEKIYPINDELSSKILGVIKNLNGKSDILVISDYAKGLITKELMDDIKKEFKGKILIDPKPKNDFYKDVYLIKPNLKEASQILGREIENKDDELEKSGLESVDKYNSNFVITRGEKGATLITVDEIFTMFQQKSKRS</sequence>
<reference key="1">
    <citation type="journal article" date="1996" name="Science">
        <title>Complete genome sequence of the methanogenic archaeon, Methanococcus jannaschii.</title>
        <authorList>
            <person name="Bult C.J."/>
            <person name="White O."/>
            <person name="Olsen G.J."/>
            <person name="Zhou L."/>
            <person name="Fleischmann R.D."/>
            <person name="Sutton G.G."/>
            <person name="Blake J.A."/>
            <person name="FitzGerald L.M."/>
            <person name="Clayton R.A."/>
            <person name="Gocayne J.D."/>
            <person name="Kerlavage A.R."/>
            <person name="Dougherty B.A."/>
            <person name="Tomb J.-F."/>
            <person name="Adams M.D."/>
            <person name="Reich C.I."/>
            <person name="Overbeek R."/>
            <person name="Kirkness E.F."/>
            <person name="Weinstock K.G."/>
            <person name="Merrick J.M."/>
            <person name="Glodek A."/>
            <person name="Scott J.L."/>
            <person name="Geoghagen N.S.M."/>
            <person name="Weidman J.F."/>
            <person name="Fuhrmann J.L."/>
            <person name="Nguyen D."/>
            <person name="Utterback T.R."/>
            <person name="Kelley J.M."/>
            <person name="Peterson J.D."/>
            <person name="Sadow P.W."/>
            <person name="Hanna M.C."/>
            <person name="Cotton M.D."/>
            <person name="Roberts K.M."/>
            <person name="Hurst M.A."/>
            <person name="Kaine B.P."/>
            <person name="Borodovsky M."/>
            <person name="Klenk H.-P."/>
            <person name="Fraser C.M."/>
            <person name="Smith H.O."/>
            <person name="Woese C.R."/>
            <person name="Venter J.C."/>
        </authorList>
    </citation>
    <scope>NUCLEOTIDE SEQUENCE [LARGE SCALE GENOMIC DNA]</scope>
    <source>
        <strain>ATCC 43067 / DSM 2661 / JAL-1 / JCM 10045 / NBRC 100440</strain>
    </source>
</reference>
<protein>
    <recommendedName>
        <fullName>Uncharacterized protein MJ1336</fullName>
    </recommendedName>
</protein>
<feature type="chain" id="PRO_0000107280" description="Uncharacterized protein MJ1336">
    <location>
        <begin position="1"/>
        <end position="148"/>
    </location>
</feature>
<keyword id="KW-1185">Reference proteome</keyword>
<name>Y1336_METJA</name>
<accession>Q58732</accession>
<proteinExistence type="predicted"/>
<dbReference type="EMBL" id="L77117">
    <property type="protein sequence ID" value="AAB99346.1"/>
    <property type="molecule type" value="Genomic_DNA"/>
</dbReference>
<dbReference type="PIR" id="G64466">
    <property type="entry name" value="G64466"/>
</dbReference>
<dbReference type="SMR" id="Q58732"/>
<dbReference type="STRING" id="243232.MJ_1336"/>
<dbReference type="PaxDb" id="243232-MJ_1336"/>
<dbReference type="EnsemblBacteria" id="AAB99346">
    <property type="protein sequence ID" value="AAB99346"/>
    <property type="gene ID" value="MJ_1336"/>
</dbReference>
<dbReference type="KEGG" id="mja:MJ_1336"/>
<dbReference type="eggNOG" id="arCOG00014">
    <property type="taxonomic scope" value="Archaea"/>
</dbReference>
<dbReference type="HOGENOM" id="CLU_1754709_0_0_2"/>
<dbReference type="InParanoid" id="Q58732"/>
<dbReference type="PhylomeDB" id="Q58732"/>
<dbReference type="Proteomes" id="UP000000805">
    <property type="component" value="Chromosome"/>
</dbReference>
<dbReference type="Gene3D" id="3.40.1190.20">
    <property type="match status" value="1"/>
</dbReference>
<dbReference type="InterPro" id="IPR011611">
    <property type="entry name" value="PfkB_dom"/>
</dbReference>
<dbReference type="InterPro" id="IPR029056">
    <property type="entry name" value="Ribokinase-like"/>
</dbReference>
<dbReference type="PANTHER" id="PTHR46969">
    <property type="entry name" value="BIFUNCTIONAL PROTEIN HLDE"/>
    <property type="match status" value="1"/>
</dbReference>
<dbReference type="PANTHER" id="PTHR46969:SF1">
    <property type="entry name" value="BIFUNCTIONAL PROTEIN HLDE"/>
    <property type="match status" value="1"/>
</dbReference>
<dbReference type="Pfam" id="PF00294">
    <property type="entry name" value="PfkB"/>
    <property type="match status" value="1"/>
</dbReference>
<dbReference type="SUPFAM" id="SSF53613">
    <property type="entry name" value="Ribokinase-like"/>
    <property type="match status" value="1"/>
</dbReference>